<sequence length="49" mass="5873">MRVNVTLACTECGDRNYITTKNKRNNPERVEMKKFCSRENKQTLHRETK</sequence>
<organism>
    <name type="scientific">Staphylococcus aureus (strain NCTC 8325 / PS 47)</name>
    <dbReference type="NCBI Taxonomy" id="93061"/>
    <lineage>
        <taxon>Bacteria</taxon>
        <taxon>Bacillati</taxon>
        <taxon>Bacillota</taxon>
        <taxon>Bacilli</taxon>
        <taxon>Bacillales</taxon>
        <taxon>Staphylococcaceae</taxon>
        <taxon>Staphylococcus</taxon>
    </lineage>
</organism>
<gene>
    <name evidence="1" type="primary">rpmG2</name>
    <name type="ordered locus">SAOUHSC_01651</name>
</gene>
<proteinExistence type="evidence at protein level"/>
<reference key="1">
    <citation type="book" date="2006" name="Gram positive pathogens, 2nd edition">
        <title>The Staphylococcus aureus NCTC 8325 genome.</title>
        <editorList>
            <person name="Fischetti V."/>
            <person name="Novick R."/>
            <person name="Ferretti J."/>
            <person name="Portnoy D."/>
            <person name="Rood J."/>
        </editorList>
        <authorList>
            <person name="Gillaspy A.F."/>
            <person name="Worrell V."/>
            <person name="Orvis J."/>
            <person name="Roe B.A."/>
            <person name="Dyer D.W."/>
            <person name="Iandolo J.J."/>
        </authorList>
    </citation>
    <scope>NUCLEOTIDE SEQUENCE [LARGE SCALE GENOMIC DNA]</scope>
    <source>
        <strain>NCTC 8325 / PS 47</strain>
    </source>
</reference>
<keyword id="KW-0002">3D-structure</keyword>
<keyword id="KW-1185">Reference proteome</keyword>
<keyword id="KW-0687">Ribonucleoprotein</keyword>
<keyword id="KW-0689">Ribosomal protein</keyword>
<protein>
    <recommendedName>
        <fullName evidence="1">Large ribosomal subunit protein bL33B</fullName>
    </recommendedName>
    <alternativeName>
        <fullName evidence="1">50S ribosomal protein L33 2</fullName>
    </alternativeName>
</protein>
<name>RL332_STAA8</name>
<dbReference type="EMBL" id="CP000253">
    <property type="protein sequence ID" value="ABD30727.1"/>
    <property type="molecule type" value="Genomic_DNA"/>
</dbReference>
<dbReference type="PDB" id="5LI0">
    <property type="method" value="EM"/>
    <property type="resolution" value="3.80 A"/>
    <property type="chains" value="5=8-46"/>
</dbReference>
<dbReference type="PDB" id="5ND8">
    <property type="method" value="EM"/>
    <property type="resolution" value="3.70 A"/>
    <property type="chains" value="5=1-49"/>
</dbReference>
<dbReference type="PDB" id="5ND9">
    <property type="method" value="EM"/>
    <property type="resolution" value="3.70 A"/>
    <property type="chains" value="5=1-49"/>
</dbReference>
<dbReference type="PDB" id="6DDD">
    <property type="method" value="EM"/>
    <property type="resolution" value="3.10 A"/>
    <property type="chains" value="O=1-49"/>
</dbReference>
<dbReference type="PDB" id="6DDG">
    <property type="method" value="EM"/>
    <property type="resolution" value="3.10 A"/>
    <property type="chains" value="O=1-49"/>
</dbReference>
<dbReference type="PDB" id="6WQN">
    <property type="method" value="EM"/>
    <property type="resolution" value="2.90 A"/>
    <property type="chains" value="O=1-49"/>
</dbReference>
<dbReference type="PDB" id="6WQQ">
    <property type="method" value="EM"/>
    <property type="resolution" value="3.10 A"/>
    <property type="chains" value="O=1-49"/>
</dbReference>
<dbReference type="PDB" id="6WRS">
    <property type="method" value="EM"/>
    <property type="resolution" value="3.20 A"/>
    <property type="chains" value="O=1-49"/>
</dbReference>
<dbReference type="PDB" id="6WRU">
    <property type="method" value="EM"/>
    <property type="resolution" value="3.10 A"/>
    <property type="chains" value="O=1-49"/>
</dbReference>
<dbReference type="PDB" id="6YEF">
    <property type="method" value="EM"/>
    <property type="resolution" value="3.20 A"/>
    <property type="chains" value="5=1-49"/>
</dbReference>
<dbReference type="PDB" id="7NHL">
    <property type="method" value="EM"/>
    <property type="resolution" value="3.10 A"/>
    <property type="chains" value="6=1-49"/>
</dbReference>
<dbReference type="PDB" id="7NHM">
    <property type="method" value="EM"/>
    <property type="resolution" value="3.10 A"/>
    <property type="chains" value="6=1-49"/>
</dbReference>
<dbReference type="PDB" id="7TTU">
    <property type="method" value="EM"/>
    <property type="resolution" value="3.00 A"/>
    <property type="chains" value="O=1-49"/>
</dbReference>
<dbReference type="PDB" id="7TTW">
    <property type="method" value="EM"/>
    <property type="resolution" value="2.90 A"/>
    <property type="chains" value="O=1-49"/>
</dbReference>
<dbReference type="PDBsum" id="5LI0"/>
<dbReference type="PDBsum" id="5ND8"/>
<dbReference type="PDBsum" id="5ND9"/>
<dbReference type="PDBsum" id="6DDD"/>
<dbReference type="PDBsum" id="6DDG"/>
<dbReference type="PDBsum" id="6WQN"/>
<dbReference type="PDBsum" id="6WQQ"/>
<dbReference type="PDBsum" id="6WRS"/>
<dbReference type="PDBsum" id="6WRU"/>
<dbReference type="PDBsum" id="6YEF"/>
<dbReference type="PDBsum" id="7NHL"/>
<dbReference type="PDBsum" id="7NHM"/>
<dbReference type="PDBsum" id="7TTU"/>
<dbReference type="PDBsum" id="7TTW"/>
<dbReference type="EMDB" id="EMD-10791"/>
<dbReference type="EMDB" id="EMD-12332"/>
<dbReference type="EMDB" id="EMD-12333"/>
<dbReference type="EMDB" id="EMD-3624"/>
<dbReference type="EMDB" id="EMD-3625"/>
<dbReference type="EMDB" id="EMD-4050"/>
<dbReference type="SMR" id="Q2FY22"/>
<dbReference type="IntAct" id="Q2FY22">
    <property type="interactions" value="1"/>
</dbReference>
<dbReference type="STRING" id="93061.SAOUHSC_01651"/>
<dbReference type="PaxDb" id="1280-SAXN108_1573"/>
<dbReference type="KEGG" id="sao:SAOUHSC_01651"/>
<dbReference type="PATRIC" id="fig|93061.5.peg.1502"/>
<dbReference type="eggNOG" id="COG0267">
    <property type="taxonomic scope" value="Bacteria"/>
</dbReference>
<dbReference type="HOGENOM" id="CLU_190949_0_2_9"/>
<dbReference type="OrthoDB" id="197660at2"/>
<dbReference type="PRO" id="PR:Q2FY22"/>
<dbReference type="Proteomes" id="UP000008816">
    <property type="component" value="Chromosome"/>
</dbReference>
<dbReference type="GO" id="GO:0005737">
    <property type="term" value="C:cytoplasm"/>
    <property type="evidence" value="ECO:0007669"/>
    <property type="project" value="UniProtKB-ARBA"/>
</dbReference>
<dbReference type="GO" id="GO:1990904">
    <property type="term" value="C:ribonucleoprotein complex"/>
    <property type="evidence" value="ECO:0007669"/>
    <property type="project" value="UniProtKB-KW"/>
</dbReference>
<dbReference type="GO" id="GO:0005840">
    <property type="term" value="C:ribosome"/>
    <property type="evidence" value="ECO:0007669"/>
    <property type="project" value="UniProtKB-KW"/>
</dbReference>
<dbReference type="GO" id="GO:0003735">
    <property type="term" value="F:structural constituent of ribosome"/>
    <property type="evidence" value="ECO:0007669"/>
    <property type="project" value="InterPro"/>
</dbReference>
<dbReference type="GO" id="GO:0006412">
    <property type="term" value="P:translation"/>
    <property type="evidence" value="ECO:0007669"/>
    <property type="project" value="UniProtKB-UniRule"/>
</dbReference>
<dbReference type="Gene3D" id="2.20.28.120">
    <property type="entry name" value="Ribosomal protein L33"/>
    <property type="match status" value="1"/>
</dbReference>
<dbReference type="HAMAP" id="MF_00294">
    <property type="entry name" value="Ribosomal_bL33"/>
    <property type="match status" value="1"/>
</dbReference>
<dbReference type="InterPro" id="IPR001705">
    <property type="entry name" value="Ribosomal_bL33"/>
</dbReference>
<dbReference type="InterPro" id="IPR018264">
    <property type="entry name" value="Ribosomal_bL33_CS"/>
</dbReference>
<dbReference type="InterPro" id="IPR038584">
    <property type="entry name" value="Ribosomal_bL33_sf"/>
</dbReference>
<dbReference type="InterPro" id="IPR011332">
    <property type="entry name" value="Ribosomal_zn-bd"/>
</dbReference>
<dbReference type="NCBIfam" id="NF001764">
    <property type="entry name" value="PRK00504.1"/>
    <property type="match status" value="1"/>
</dbReference>
<dbReference type="NCBIfam" id="NF001860">
    <property type="entry name" value="PRK00595.1"/>
    <property type="match status" value="1"/>
</dbReference>
<dbReference type="NCBIfam" id="TIGR01023">
    <property type="entry name" value="rpmG_bact"/>
    <property type="match status" value="1"/>
</dbReference>
<dbReference type="PANTHER" id="PTHR43168">
    <property type="entry name" value="50S RIBOSOMAL PROTEIN L33, CHLOROPLASTIC"/>
    <property type="match status" value="1"/>
</dbReference>
<dbReference type="PANTHER" id="PTHR43168:SF2">
    <property type="entry name" value="LARGE RIBOSOMAL SUBUNIT PROTEIN BL33C"/>
    <property type="match status" value="1"/>
</dbReference>
<dbReference type="Pfam" id="PF00471">
    <property type="entry name" value="Ribosomal_L33"/>
    <property type="match status" value="1"/>
</dbReference>
<dbReference type="SUPFAM" id="SSF57829">
    <property type="entry name" value="Zn-binding ribosomal proteins"/>
    <property type="match status" value="1"/>
</dbReference>
<dbReference type="PROSITE" id="PS00582">
    <property type="entry name" value="RIBOSOMAL_L33"/>
    <property type="match status" value="1"/>
</dbReference>
<evidence type="ECO:0000255" key="1">
    <source>
        <dbReference type="HAMAP-Rule" id="MF_00294"/>
    </source>
</evidence>
<evidence type="ECO:0007829" key="2">
    <source>
        <dbReference type="PDB" id="6WQN"/>
    </source>
</evidence>
<comment type="similarity">
    <text evidence="1">Belongs to the bacterial ribosomal protein bL33 family.</text>
</comment>
<feature type="chain" id="PRO_0000356689" description="Large ribosomal subunit protein bL33B">
    <location>
        <begin position="1"/>
        <end position="49"/>
    </location>
</feature>
<feature type="strand" evidence="2">
    <location>
        <begin position="2"/>
        <end position="12"/>
    </location>
</feature>
<feature type="strand" evidence="2">
    <location>
        <begin position="17"/>
        <end position="22"/>
    </location>
</feature>
<feature type="turn" evidence="2">
    <location>
        <begin position="23"/>
        <end position="25"/>
    </location>
</feature>
<feature type="strand" evidence="2">
    <location>
        <begin position="33"/>
        <end position="36"/>
    </location>
</feature>
<feature type="turn" evidence="2">
    <location>
        <begin position="37"/>
        <end position="40"/>
    </location>
</feature>
<feature type="strand" evidence="2">
    <location>
        <begin position="41"/>
        <end position="46"/>
    </location>
</feature>
<accession>Q2FY22</accession>